<feature type="chain" id="PRO_0000445147" description="Small cysteine and glycine repeat-containing protein 7">
    <location>
        <begin position="1"/>
        <end position="96"/>
    </location>
</feature>
<feature type="region of interest" description="14 X 2 AA repeats of CG" evidence="2">
    <location>
        <begin position="4"/>
        <end position="80"/>
    </location>
</feature>
<proteinExistence type="evidence at protein level"/>
<gene>
    <name evidence="4" type="primary">SCYGR7</name>
    <name evidence="1" type="synonym">KRTAP28-7</name>
</gene>
<sequence>MGCCGCGSCGGCGGGCGGCGGGCGGGCGGGCGSCTTCRCYRVGCCSSCCPCCRGCCGGCCSTPVICCCRRTCGSCGCGCGKGCCQQKGCCQKQCCC</sequence>
<evidence type="ECO:0000303" key="1">
    <source>
    </source>
</evidence>
<evidence type="ECO:0000305" key="2"/>
<evidence type="ECO:0000305" key="3">
    <source>
    </source>
</evidence>
<evidence type="ECO:0000312" key="4">
    <source>
        <dbReference type="HGNC" id="HGNC:34226"/>
    </source>
</evidence>
<reference key="1">
    <citation type="journal article" date="2005" name="Nature">
        <title>Generation and annotation of the DNA sequences of human chromosomes 2 and 4.</title>
        <authorList>
            <person name="Hillier L.W."/>
            <person name="Graves T.A."/>
            <person name="Fulton R.S."/>
            <person name="Fulton L.A."/>
            <person name="Pepin K.H."/>
            <person name="Minx P."/>
            <person name="Wagner-McPherson C."/>
            <person name="Layman D."/>
            <person name="Wylie K."/>
            <person name="Sekhon M."/>
            <person name="Becker M.C."/>
            <person name="Fewell G.A."/>
            <person name="Delehaunty K.D."/>
            <person name="Miner T.L."/>
            <person name="Nash W.E."/>
            <person name="Kremitzki C."/>
            <person name="Oddy L."/>
            <person name="Du H."/>
            <person name="Sun H."/>
            <person name="Bradshaw-Cordum H."/>
            <person name="Ali J."/>
            <person name="Carter J."/>
            <person name="Cordes M."/>
            <person name="Harris A."/>
            <person name="Isak A."/>
            <person name="van Brunt A."/>
            <person name="Nguyen C."/>
            <person name="Du F."/>
            <person name="Courtney L."/>
            <person name="Kalicki J."/>
            <person name="Ozersky P."/>
            <person name="Abbott S."/>
            <person name="Armstrong J."/>
            <person name="Belter E.A."/>
            <person name="Caruso L."/>
            <person name="Cedroni M."/>
            <person name="Cotton M."/>
            <person name="Davidson T."/>
            <person name="Desai A."/>
            <person name="Elliott G."/>
            <person name="Erb T."/>
            <person name="Fronick C."/>
            <person name="Gaige T."/>
            <person name="Haakenson W."/>
            <person name="Haglund K."/>
            <person name="Holmes A."/>
            <person name="Harkins R."/>
            <person name="Kim K."/>
            <person name="Kruchowski S.S."/>
            <person name="Strong C.M."/>
            <person name="Grewal N."/>
            <person name="Goyea E."/>
            <person name="Hou S."/>
            <person name="Levy A."/>
            <person name="Martinka S."/>
            <person name="Mead K."/>
            <person name="McLellan M.D."/>
            <person name="Meyer R."/>
            <person name="Randall-Maher J."/>
            <person name="Tomlinson C."/>
            <person name="Dauphin-Kohlberg S."/>
            <person name="Kozlowicz-Reilly A."/>
            <person name="Shah N."/>
            <person name="Swearengen-Shahid S."/>
            <person name="Snider J."/>
            <person name="Strong J.T."/>
            <person name="Thompson J."/>
            <person name="Yoakum M."/>
            <person name="Leonard S."/>
            <person name="Pearman C."/>
            <person name="Trani L."/>
            <person name="Radionenko M."/>
            <person name="Waligorski J.E."/>
            <person name="Wang C."/>
            <person name="Rock S.M."/>
            <person name="Tin-Wollam A.-M."/>
            <person name="Maupin R."/>
            <person name="Latreille P."/>
            <person name="Wendl M.C."/>
            <person name="Yang S.-P."/>
            <person name="Pohl C."/>
            <person name="Wallis J.W."/>
            <person name="Spieth J."/>
            <person name="Bieri T.A."/>
            <person name="Berkowicz N."/>
            <person name="Nelson J.O."/>
            <person name="Osborne J."/>
            <person name="Ding L."/>
            <person name="Meyer R."/>
            <person name="Sabo A."/>
            <person name="Shotland Y."/>
            <person name="Sinha P."/>
            <person name="Wohldmann P.E."/>
            <person name="Cook L.L."/>
            <person name="Hickenbotham M.T."/>
            <person name="Eldred J."/>
            <person name="Williams D."/>
            <person name="Jones T.A."/>
            <person name="She X."/>
            <person name="Ciccarelli F.D."/>
            <person name="Izaurralde E."/>
            <person name="Taylor J."/>
            <person name="Schmutz J."/>
            <person name="Myers R.M."/>
            <person name="Cox D.R."/>
            <person name="Huang X."/>
            <person name="McPherson J.D."/>
            <person name="Mardis E.R."/>
            <person name="Clifton S.W."/>
            <person name="Warren W.C."/>
            <person name="Chinwalla A.T."/>
            <person name="Eddy S.R."/>
            <person name="Marra M.A."/>
            <person name="Ovcharenko I."/>
            <person name="Furey T.S."/>
            <person name="Miller W."/>
            <person name="Eichler E.E."/>
            <person name="Bork P."/>
            <person name="Suyama M."/>
            <person name="Torrents D."/>
            <person name="Waterston R.H."/>
            <person name="Wilson R.K."/>
        </authorList>
    </citation>
    <scope>NUCLEOTIDE SEQUENCE [LARGE SCALE GENOMIC DNA]</scope>
</reference>
<reference key="2">
    <citation type="journal article" date="2008" name="BMC Evol. Biol.">
        <title>Molecular evolution of the keratin associated protein gene family in mammals, role in the evolution of mammalian hair.</title>
        <authorList>
            <person name="Wu D.D."/>
            <person name="Irwin D.M."/>
            <person name="Zhang Y.P."/>
        </authorList>
    </citation>
    <scope>FAMILY CHARACTERIZATION</scope>
</reference>
<protein>
    <recommendedName>
        <fullName evidence="2">Small cysteine and glycine repeat-containing protein 7</fullName>
    </recommendedName>
    <alternativeName>
        <fullName evidence="1">Keratin-associated protein 28-7</fullName>
    </alternativeName>
</protein>
<keyword id="KW-0416">Keratin</keyword>
<keyword id="KW-1185">Reference proteome</keyword>
<keyword id="KW-0677">Repeat</keyword>
<name>SCGR7_HUMAN</name>
<accession>A0A286YF01</accession>
<dbReference type="EMBL" id="AC093762">
    <property type="status" value="NOT_ANNOTATED_CDS"/>
    <property type="molecule type" value="Genomic_DNA"/>
</dbReference>
<dbReference type="CCDS" id="CCDS92959.1"/>
<dbReference type="RefSeq" id="NP_001382337.1">
    <property type="nucleotide sequence ID" value="NM_001395408.1"/>
</dbReference>
<dbReference type="STRING" id="9606.ENSP00000493152"/>
<dbReference type="BioMuta" id="ENSG00000284718"/>
<dbReference type="MassIVE" id="A0A286YF01"/>
<dbReference type="PeptideAtlas" id="A0A286YF01"/>
<dbReference type="Ensembl" id="ENST00000641700.1">
    <property type="protein sequence ID" value="ENSP00000493152.1"/>
    <property type="gene ID" value="ENSG00000284718.1"/>
</dbReference>
<dbReference type="GeneID" id="112441438"/>
<dbReference type="MANE-Select" id="ENST00000641700.1">
    <property type="protein sequence ID" value="ENSP00000493152.1"/>
    <property type="RefSeq nucleotide sequence ID" value="NM_001395408.1"/>
    <property type="RefSeq protein sequence ID" value="NP_001382337.1"/>
</dbReference>
<dbReference type="AGR" id="HGNC:34226"/>
<dbReference type="GeneCards" id="SCYGR7"/>
<dbReference type="HGNC" id="HGNC:34226">
    <property type="gene designation" value="SCYGR7"/>
</dbReference>
<dbReference type="HPA" id="ENSG00000284718">
    <property type="expression patterns" value="Not detected"/>
</dbReference>
<dbReference type="neXtProt" id="NX_A0A286YF01"/>
<dbReference type="VEuPathDB" id="HostDB:ENSG00000284718"/>
<dbReference type="GeneTree" id="ENSGT00950000183380"/>
<dbReference type="InParanoid" id="A0A286YF01"/>
<dbReference type="OMA" id="DVWICEC"/>
<dbReference type="PAN-GO" id="A0A286YF01">
    <property type="GO annotations" value="0 GO annotations based on evolutionary models"/>
</dbReference>
<dbReference type="Pharos" id="A0A286YF01">
    <property type="development level" value="Tdark"/>
</dbReference>
<dbReference type="PRO" id="PR:A0A286YF01"/>
<dbReference type="Proteomes" id="UP000005640">
    <property type="component" value="Chromosome 2"/>
</dbReference>
<dbReference type="Bgee" id="ENSG00000284718">
    <property type="expression patterns" value="Expressed in skin of abdomen and 12 other cell types or tissues"/>
</dbReference>
<dbReference type="GO" id="GO:0005882">
    <property type="term" value="C:intermediate filament"/>
    <property type="evidence" value="ECO:0007669"/>
    <property type="project" value="UniProtKB-KW"/>
</dbReference>
<dbReference type="PROSITE" id="PS00198">
    <property type="entry name" value="4FE4S_FER_1"/>
    <property type="match status" value="1"/>
</dbReference>
<dbReference type="PROSITE" id="PS00022">
    <property type="entry name" value="EGF_1"/>
    <property type="match status" value="1"/>
</dbReference>
<dbReference type="PROSITE" id="PS00652">
    <property type="entry name" value="TNFR_NGFR_1"/>
    <property type="match status" value="1"/>
</dbReference>
<dbReference type="PROSITE" id="PS01208">
    <property type="entry name" value="VWFC_1"/>
    <property type="match status" value="1"/>
</dbReference>
<dbReference type="PROSITE" id="PS00463">
    <property type="entry name" value="ZN2_CY6_FUNGAL_1"/>
    <property type="match status" value="1"/>
</dbReference>
<organism>
    <name type="scientific">Homo sapiens</name>
    <name type="common">Human</name>
    <dbReference type="NCBI Taxonomy" id="9606"/>
    <lineage>
        <taxon>Eukaryota</taxon>
        <taxon>Metazoa</taxon>
        <taxon>Chordata</taxon>
        <taxon>Craniata</taxon>
        <taxon>Vertebrata</taxon>
        <taxon>Euteleostomi</taxon>
        <taxon>Mammalia</taxon>
        <taxon>Eutheria</taxon>
        <taxon>Euarchontoglires</taxon>
        <taxon>Primates</taxon>
        <taxon>Haplorrhini</taxon>
        <taxon>Catarrhini</taxon>
        <taxon>Hominidae</taxon>
        <taxon>Homo</taxon>
    </lineage>
</organism>
<comment type="function">
    <text evidence="2">In the hair cortex, hair keratin intermediate filaments are embedded in an interfilamentous matrix, consisting of hair keratin-associated proteins (KRTAP), which are essential for the formation of a rigid and resistant hair shaft through their extensive disulfide bond cross-linking with abundant cysteine residues of hair keratins. The matrix proteins include the high-sulfur and high-glycine-tyrosine keratins.</text>
</comment>
<comment type="miscellaneous">
    <text evidence="1">Human have a similar number of genes as other primates despite the relative hairlessness of humans.</text>
</comment>
<comment type="similarity">
    <text evidence="3">Belongs to the KRTAP type 28 family.</text>
</comment>